<keyword id="KW-0235">DNA replication</keyword>
<keyword id="KW-0238">DNA-binding</keyword>
<keyword id="KW-0639">Primosome</keyword>
<dbReference type="EMBL" id="AM933173">
    <property type="protein sequence ID" value="CAR40136.1"/>
    <property type="molecule type" value="Genomic_DNA"/>
</dbReference>
<dbReference type="RefSeq" id="WP_000098573.1">
    <property type="nucleotide sequence ID" value="NC_011274.1"/>
</dbReference>
<dbReference type="SMR" id="B5R9T0"/>
<dbReference type="KEGG" id="seg:SG4374"/>
<dbReference type="HOGENOM" id="CLU_1501592_0_0_6"/>
<dbReference type="Proteomes" id="UP000008321">
    <property type="component" value="Chromosome"/>
</dbReference>
<dbReference type="GO" id="GO:1990077">
    <property type="term" value="C:primosome complex"/>
    <property type="evidence" value="ECO:0007669"/>
    <property type="project" value="UniProtKB-KW"/>
</dbReference>
<dbReference type="GO" id="GO:0006269">
    <property type="term" value="P:DNA replication, synthesis of primer"/>
    <property type="evidence" value="ECO:0007669"/>
    <property type="project" value="UniProtKB-UniRule"/>
</dbReference>
<dbReference type="Gene3D" id="1.10.8.1180">
    <property type="match status" value="1"/>
</dbReference>
<dbReference type="HAMAP" id="MF_01061">
    <property type="entry name" value="DnaT"/>
    <property type="match status" value="1"/>
</dbReference>
<dbReference type="InterPro" id="IPR020917">
    <property type="entry name" value="DnaT"/>
</dbReference>
<dbReference type="InterPro" id="IPR040480">
    <property type="entry name" value="DnaT_DNA_bind"/>
</dbReference>
<dbReference type="NCBIfam" id="NF002770">
    <property type="entry name" value="PRK02854.1"/>
    <property type="match status" value="1"/>
</dbReference>
<dbReference type="Pfam" id="PF17948">
    <property type="entry name" value="DnaT"/>
    <property type="match status" value="1"/>
</dbReference>
<sequence length="179" mass="19478">MSSRILTSDVIGIDALLHDHHAVLAKSTGGAVAVFANNAPAFYAVTPARMAELLALEEKLSRPGSDVALDAQFYEEPEAAPVAIPCGKFAMYPAWQPDADFQRQAALWGVALREPVTAEELAAFIAYWQAEGKVFHHIQWQQKLARSVQISRSSNGGMPQRDINSVSEPDNHIPPGFRG</sequence>
<comment type="function">
    <text evidence="1">Involved in the restart of stalled replication forks, which reloads the replicative helicase on sites other than the origin of replication. Can function in multiple replication restart pathways. Displaces ssDNA from a PriB-ssDNA complex. Probably forms a spiral filament on ssDNA.</text>
</comment>
<comment type="subunit">
    <text evidence="1">Homooligomerizes. Interacts with PriB. Component of the replication restart primosome. Primosome assembly occurs via a 'hand-off' mechanism. PriA binds to replication forks, subsequently PriB then DnaT bind; DnaT then displaces ssDNA to generate the helicase loading substrate.</text>
</comment>
<comment type="similarity">
    <text evidence="1">Belongs to the DnaT family.</text>
</comment>
<organism>
    <name type="scientific">Salmonella gallinarum (strain 287/91 / NCTC 13346)</name>
    <dbReference type="NCBI Taxonomy" id="550538"/>
    <lineage>
        <taxon>Bacteria</taxon>
        <taxon>Pseudomonadati</taxon>
        <taxon>Pseudomonadota</taxon>
        <taxon>Gammaproteobacteria</taxon>
        <taxon>Enterobacterales</taxon>
        <taxon>Enterobacteriaceae</taxon>
        <taxon>Salmonella</taxon>
    </lineage>
</organism>
<proteinExistence type="inferred from homology"/>
<protein>
    <recommendedName>
        <fullName evidence="1">Replication restart protein DnaT</fullName>
    </recommendedName>
</protein>
<accession>B5R9T0</accession>
<feature type="chain" id="PRO_1000136440" description="Replication restart protein DnaT">
    <location>
        <begin position="1"/>
        <end position="179"/>
    </location>
</feature>
<feature type="region of interest" description="Disordered" evidence="2">
    <location>
        <begin position="151"/>
        <end position="179"/>
    </location>
</feature>
<feature type="compositionally biased region" description="Polar residues" evidence="2">
    <location>
        <begin position="151"/>
        <end position="168"/>
    </location>
</feature>
<gene>
    <name evidence="1" type="primary">dnaT</name>
    <name type="ordered locus">SG4374</name>
</gene>
<evidence type="ECO:0000255" key="1">
    <source>
        <dbReference type="HAMAP-Rule" id="MF_01061"/>
    </source>
</evidence>
<evidence type="ECO:0000256" key="2">
    <source>
        <dbReference type="SAM" id="MobiDB-lite"/>
    </source>
</evidence>
<name>DNAT_SALG2</name>
<reference key="1">
    <citation type="journal article" date="2008" name="Genome Res.">
        <title>Comparative genome analysis of Salmonella enteritidis PT4 and Salmonella gallinarum 287/91 provides insights into evolutionary and host adaptation pathways.</title>
        <authorList>
            <person name="Thomson N.R."/>
            <person name="Clayton D.J."/>
            <person name="Windhorst D."/>
            <person name="Vernikos G."/>
            <person name="Davidson S."/>
            <person name="Churcher C."/>
            <person name="Quail M.A."/>
            <person name="Stevens M."/>
            <person name="Jones M.A."/>
            <person name="Watson M."/>
            <person name="Barron A."/>
            <person name="Layton A."/>
            <person name="Pickard D."/>
            <person name="Kingsley R.A."/>
            <person name="Bignell A."/>
            <person name="Clark L."/>
            <person name="Harris B."/>
            <person name="Ormond D."/>
            <person name="Abdellah Z."/>
            <person name="Brooks K."/>
            <person name="Cherevach I."/>
            <person name="Chillingworth T."/>
            <person name="Woodward J."/>
            <person name="Norberczak H."/>
            <person name="Lord A."/>
            <person name="Arrowsmith C."/>
            <person name="Jagels K."/>
            <person name="Moule S."/>
            <person name="Mungall K."/>
            <person name="Saunders M."/>
            <person name="Whitehead S."/>
            <person name="Chabalgoity J.A."/>
            <person name="Maskell D."/>
            <person name="Humphreys T."/>
            <person name="Roberts M."/>
            <person name="Barrow P.A."/>
            <person name="Dougan G."/>
            <person name="Parkhill J."/>
        </authorList>
    </citation>
    <scope>NUCLEOTIDE SEQUENCE [LARGE SCALE GENOMIC DNA]</scope>
    <source>
        <strain>287/91 / NCTC 13346</strain>
    </source>
</reference>